<feature type="chain" id="PRO_0000365022" description="Uncharacterized HTH-type transcriptional regulator YtdP">
    <location>
        <begin position="1"/>
        <end position="772"/>
    </location>
</feature>
<feature type="transmembrane region" description="Helical" evidence="1">
    <location>
        <begin position="16"/>
        <end position="36"/>
    </location>
</feature>
<feature type="transmembrane region" description="Helical" evidence="1">
    <location>
        <begin position="301"/>
        <end position="321"/>
    </location>
</feature>
<feature type="domain" description="HTH araC/xylS-type" evidence="2">
    <location>
        <begin position="670"/>
        <end position="768"/>
    </location>
</feature>
<feature type="DNA-binding region" description="H-T-H motif" evidence="2">
    <location>
        <begin position="687"/>
        <end position="708"/>
    </location>
</feature>
<feature type="DNA-binding region" description="H-T-H motif" evidence="2">
    <location>
        <begin position="735"/>
        <end position="758"/>
    </location>
</feature>
<accession>O32071</accession>
<comment type="subcellular location">
    <subcellularLocation>
        <location evidence="3">Cell membrane</location>
        <topology evidence="3">Multi-pass membrane protein</topology>
    </subcellularLocation>
</comment>
<protein>
    <recommendedName>
        <fullName>Uncharacterized HTH-type transcriptional regulator YtdP</fullName>
    </recommendedName>
</protein>
<proteinExistence type="predicted"/>
<sequence length="772" mass="89545">MGGFMKRSQYKFYYKLITFFCLLSTIPVILVGLFSYEHSQKTAISNVSEEKFDTLQQTQQSIEHILKTVDHSLTHYVSSPPLLRTLSEPLHSDQFQIYNQVNQELNYLQSFDTDLSNMTLVSYTKKWYMNNSGLYRLNTDTLHEAASAYTKQKASRSYWTLEENNHLISTKEGTAENCRYNINLIKQLPLNSTNTKGLAAASIPSCSLVKNMPGYSNANNLFIIDEKGLIILHNNMSDVGESLHNDGFVQKVLAQTANSGQFETVIDRIHYKVTYQKSDYNAWTYFSLVSLPELKKEAKSIGWITFAVCLILLTLSLLFSWLGSRHFYKPIRVLYESFARHGAIQEKQQPPQNEFELIEQSFKQLKDRNDDLEETMKQQATHLQQYFMVRLMLGKLTDEEVDNRFESLGLKQNWRHLALLVLQIDTLNHTPYEKKDMDLLLFAVNSLIERNIPTDKHLAPAVVDKQQATILINQSGTKEEFMAELNETARMIQEKAEAELQLSVSIGISQPFDVLTKAKTAYAEGSEALKYRLKAENKSIIFYEDLDQKKTFKTHFPKQLQHELFDAVKAGDKEKADKCLHAILQAIFTQNTNPYQFQIAIARFLNHVIELMHVLGIELFELEENKMLYDQIFELKTFEDTENWLKNEFIDPMTDKVNARADAQYKNISDNIIHIIHHEFESELTLDEIARRLHYNPNYLSSIFKKEMGISFSEYVSSYRHHMAKSWLAETDMAVKDIAEKLKYKNSQNFIRSFKKLEGITPGNYRQQKRSM</sequence>
<gene>
    <name type="primary">ytdP</name>
    <name type="ordered locus">BSU30150</name>
</gene>
<keyword id="KW-1003">Cell membrane</keyword>
<keyword id="KW-0238">DNA-binding</keyword>
<keyword id="KW-0472">Membrane</keyword>
<keyword id="KW-1185">Reference proteome</keyword>
<keyword id="KW-0804">Transcription</keyword>
<keyword id="KW-0805">Transcription regulation</keyword>
<keyword id="KW-0812">Transmembrane</keyword>
<keyword id="KW-1133">Transmembrane helix</keyword>
<reference key="1">
    <citation type="journal article" date="1997" name="Nature">
        <title>The complete genome sequence of the Gram-positive bacterium Bacillus subtilis.</title>
        <authorList>
            <person name="Kunst F."/>
            <person name="Ogasawara N."/>
            <person name="Moszer I."/>
            <person name="Albertini A.M."/>
            <person name="Alloni G."/>
            <person name="Azevedo V."/>
            <person name="Bertero M.G."/>
            <person name="Bessieres P."/>
            <person name="Bolotin A."/>
            <person name="Borchert S."/>
            <person name="Borriss R."/>
            <person name="Boursier L."/>
            <person name="Brans A."/>
            <person name="Braun M."/>
            <person name="Brignell S.C."/>
            <person name="Bron S."/>
            <person name="Brouillet S."/>
            <person name="Bruschi C.V."/>
            <person name="Caldwell B."/>
            <person name="Capuano V."/>
            <person name="Carter N.M."/>
            <person name="Choi S.-K."/>
            <person name="Codani J.-J."/>
            <person name="Connerton I.F."/>
            <person name="Cummings N.J."/>
            <person name="Daniel R.A."/>
            <person name="Denizot F."/>
            <person name="Devine K.M."/>
            <person name="Duesterhoeft A."/>
            <person name="Ehrlich S.D."/>
            <person name="Emmerson P.T."/>
            <person name="Entian K.-D."/>
            <person name="Errington J."/>
            <person name="Fabret C."/>
            <person name="Ferrari E."/>
            <person name="Foulger D."/>
            <person name="Fritz C."/>
            <person name="Fujita M."/>
            <person name="Fujita Y."/>
            <person name="Fuma S."/>
            <person name="Galizzi A."/>
            <person name="Galleron N."/>
            <person name="Ghim S.-Y."/>
            <person name="Glaser P."/>
            <person name="Goffeau A."/>
            <person name="Golightly E.J."/>
            <person name="Grandi G."/>
            <person name="Guiseppi G."/>
            <person name="Guy B.J."/>
            <person name="Haga K."/>
            <person name="Haiech J."/>
            <person name="Harwood C.R."/>
            <person name="Henaut A."/>
            <person name="Hilbert H."/>
            <person name="Holsappel S."/>
            <person name="Hosono S."/>
            <person name="Hullo M.-F."/>
            <person name="Itaya M."/>
            <person name="Jones L.-M."/>
            <person name="Joris B."/>
            <person name="Karamata D."/>
            <person name="Kasahara Y."/>
            <person name="Klaerr-Blanchard M."/>
            <person name="Klein C."/>
            <person name="Kobayashi Y."/>
            <person name="Koetter P."/>
            <person name="Koningstein G."/>
            <person name="Krogh S."/>
            <person name="Kumano M."/>
            <person name="Kurita K."/>
            <person name="Lapidus A."/>
            <person name="Lardinois S."/>
            <person name="Lauber J."/>
            <person name="Lazarevic V."/>
            <person name="Lee S.-M."/>
            <person name="Levine A."/>
            <person name="Liu H."/>
            <person name="Masuda S."/>
            <person name="Mauel C."/>
            <person name="Medigue C."/>
            <person name="Medina N."/>
            <person name="Mellado R.P."/>
            <person name="Mizuno M."/>
            <person name="Moestl D."/>
            <person name="Nakai S."/>
            <person name="Noback M."/>
            <person name="Noone D."/>
            <person name="O'Reilly M."/>
            <person name="Ogawa K."/>
            <person name="Ogiwara A."/>
            <person name="Oudega B."/>
            <person name="Park S.-H."/>
            <person name="Parro V."/>
            <person name="Pohl T.M."/>
            <person name="Portetelle D."/>
            <person name="Porwollik S."/>
            <person name="Prescott A.M."/>
            <person name="Presecan E."/>
            <person name="Pujic P."/>
            <person name="Purnelle B."/>
            <person name="Rapoport G."/>
            <person name="Rey M."/>
            <person name="Reynolds S."/>
            <person name="Rieger M."/>
            <person name="Rivolta C."/>
            <person name="Rocha E."/>
            <person name="Roche B."/>
            <person name="Rose M."/>
            <person name="Sadaie Y."/>
            <person name="Sato T."/>
            <person name="Scanlan E."/>
            <person name="Schleich S."/>
            <person name="Schroeter R."/>
            <person name="Scoffone F."/>
            <person name="Sekiguchi J."/>
            <person name="Sekowska A."/>
            <person name="Seror S.J."/>
            <person name="Serror P."/>
            <person name="Shin B.-S."/>
            <person name="Soldo B."/>
            <person name="Sorokin A."/>
            <person name="Tacconi E."/>
            <person name="Takagi T."/>
            <person name="Takahashi H."/>
            <person name="Takemaru K."/>
            <person name="Takeuchi M."/>
            <person name="Tamakoshi A."/>
            <person name="Tanaka T."/>
            <person name="Terpstra P."/>
            <person name="Tognoni A."/>
            <person name="Tosato V."/>
            <person name="Uchiyama S."/>
            <person name="Vandenbol M."/>
            <person name="Vannier F."/>
            <person name="Vassarotti A."/>
            <person name="Viari A."/>
            <person name="Wambutt R."/>
            <person name="Wedler E."/>
            <person name="Wedler H."/>
            <person name="Weitzenegger T."/>
            <person name="Winters P."/>
            <person name="Wipat A."/>
            <person name="Yamamoto H."/>
            <person name="Yamane K."/>
            <person name="Yasumoto K."/>
            <person name="Yata K."/>
            <person name="Yoshida K."/>
            <person name="Yoshikawa H.-F."/>
            <person name="Zumstein E."/>
            <person name="Yoshikawa H."/>
            <person name="Danchin A."/>
        </authorList>
    </citation>
    <scope>NUCLEOTIDE SEQUENCE [LARGE SCALE GENOMIC DNA]</scope>
    <source>
        <strain>168</strain>
    </source>
</reference>
<name>YTDP_BACSU</name>
<organism>
    <name type="scientific">Bacillus subtilis (strain 168)</name>
    <dbReference type="NCBI Taxonomy" id="224308"/>
    <lineage>
        <taxon>Bacteria</taxon>
        <taxon>Bacillati</taxon>
        <taxon>Bacillota</taxon>
        <taxon>Bacilli</taxon>
        <taxon>Bacillales</taxon>
        <taxon>Bacillaceae</taxon>
        <taxon>Bacillus</taxon>
    </lineage>
</organism>
<evidence type="ECO:0000255" key="1"/>
<evidence type="ECO:0000255" key="2">
    <source>
        <dbReference type="PROSITE-ProRule" id="PRU00593"/>
    </source>
</evidence>
<evidence type="ECO:0000305" key="3"/>
<dbReference type="EMBL" id="AL009126">
    <property type="protein sequence ID" value="CAB14993.1"/>
    <property type="molecule type" value="Genomic_DNA"/>
</dbReference>
<dbReference type="PIR" id="C69990">
    <property type="entry name" value="C69990"/>
</dbReference>
<dbReference type="RefSeq" id="WP_009968004.1">
    <property type="nucleotide sequence ID" value="NZ_OZ025638.1"/>
</dbReference>
<dbReference type="FunCoup" id="O32071">
    <property type="interactions" value="51"/>
</dbReference>
<dbReference type="IntAct" id="O32071">
    <property type="interactions" value="17"/>
</dbReference>
<dbReference type="STRING" id="224308.BSU30150"/>
<dbReference type="PaxDb" id="224308-BSU30150"/>
<dbReference type="EnsemblBacteria" id="CAB14993">
    <property type="protein sequence ID" value="CAB14993"/>
    <property type="gene ID" value="BSU_30150"/>
</dbReference>
<dbReference type="GeneID" id="936234"/>
<dbReference type="KEGG" id="bsu:BSU30150"/>
<dbReference type="PATRIC" id="fig|224308.179.peg.3271"/>
<dbReference type="eggNOG" id="COG2207">
    <property type="taxonomic scope" value="Bacteria"/>
</dbReference>
<dbReference type="InParanoid" id="O32071"/>
<dbReference type="OrthoDB" id="1975037at2"/>
<dbReference type="PhylomeDB" id="O32071"/>
<dbReference type="BioCyc" id="BSUB:BSU30150-MONOMER"/>
<dbReference type="Proteomes" id="UP000001570">
    <property type="component" value="Chromosome"/>
</dbReference>
<dbReference type="GO" id="GO:0005886">
    <property type="term" value="C:plasma membrane"/>
    <property type="evidence" value="ECO:0007669"/>
    <property type="project" value="UniProtKB-SubCell"/>
</dbReference>
<dbReference type="GO" id="GO:0003700">
    <property type="term" value="F:DNA-binding transcription factor activity"/>
    <property type="evidence" value="ECO:0007669"/>
    <property type="project" value="InterPro"/>
</dbReference>
<dbReference type="GO" id="GO:0043565">
    <property type="term" value="F:sequence-specific DNA binding"/>
    <property type="evidence" value="ECO:0007669"/>
    <property type="project" value="InterPro"/>
</dbReference>
<dbReference type="Gene3D" id="1.10.10.60">
    <property type="entry name" value="Homeodomain-like"/>
    <property type="match status" value="2"/>
</dbReference>
<dbReference type="InterPro" id="IPR041522">
    <property type="entry name" value="CdaR_GGDEF"/>
</dbReference>
<dbReference type="InterPro" id="IPR033479">
    <property type="entry name" value="dCache_1"/>
</dbReference>
<dbReference type="InterPro" id="IPR009057">
    <property type="entry name" value="Homeodomain-like_sf"/>
</dbReference>
<dbReference type="InterPro" id="IPR018060">
    <property type="entry name" value="HTH_AraC"/>
</dbReference>
<dbReference type="PANTHER" id="PTHR43280">
    <property type="entry name" value="ARAC-FAMILY TRANSCRIPTIONAL REGULATOR"/>
    <property type="match status" value="1"/>
</dbReference>
<dbReference type="PANTHER" id="PTHR43280:SF10">
    <property type="entry name" value="REGULATORY PROTEIN POCR"/>
    <property type="match status" value="1"/>
</dbReference>
<dbReference type="Pfam" id="PF02743">
    <property type="entry name" value="dCache_1"/>
    <property type="match status" value="1"/>
</dbReference>
<dbReference type="Pfam" id="PF17853">
    <property type="entry name" value="GGDEF_2"/>
    <property type="match status" value="1"/>
</dbReference>
<dbReference type="Pfam" id="PF12833">
    <property type="entry name" value="HTH_18"/>
    <property type="match status" value="1"/>
</dbReference>
<dbReference type="SMART" id="SM00342">
    <property type="entry name" value="HTH_ARAC"/>
    <property type="match status" value="1"/>
</dbReference>
<dbReference type="SUPFAM" id="SSF46689">
    <property type="entry name" value="Homeodomain-like"/>
    <property type="match status" value="2"/>
</dbReference>
<dbReference type="PROSITE" id="PS01124">
    <property type="entry name" value="HTH_ARAC_FAMILY_2"/>
    <property type="match status" value="1"/>
</dbReference>